<organism>
    <name type="scientific">Homo sapiens</name>
    <name type="common">Human</name>
    <dbReference type="NCBI Taxonomy" id="9606"/>
    <lineage>
        <taxon>Eukaryota</taxon>
        <taxon>Metazoa</taxon>
        <taxon>Chordata</taxon>
        <taxon>Craniata</taxon>
        <taxon>Vertebrata</taxon>
        <taxon>Euteleostomi</taxon>
        <taxon>Mammalia</taxon>
        <taxon>Eutheria</taxon>
        <taxon>Euarchontoglires</taxon>
        <taxon>Primates</taxon>
        <taxon>Haplorrhini</taxon>
        <taxon>Catarrhini</taxon>
        <taxon>Hominidae</taxon>
        <taxon>Homo</taxon>
    </lineage>
</organism>
<name>AGRE2_HUMAN</name>
<reference key="1">
    <citation type="journal article" date="2000" name="Genomics">
        <title>Human EMR2, a novel EGF-TM7 molecule on chromosome 19p13.1, is closely related to CD97.</title>
        <authorList>
            <person name="Lin H.-H."/>
            <person name="Stacey M."/>
            <person name="Hamann J."/>
            <person name="Gordon S."/>
            <person name="McKnight A.J."/>
        </authorList>
    </citation>
    <scope>NUCLEOTIDE SEQUENCE [MRNA] (ISOFORM 1)</scope>
    <scope>TISSUE SPECIFICITY</scope>
    <scope>ALTERNATIVE SPLICING (ISOFORMS 2; 3; 4 AND 5)</scope>
    <scope>VARIANT PHE-614</scope>
</reference>
<reference key="2">
    <citation type="submission" date="2001-07" db="EMBL/GenBank/DDBJ databases">
        <title>Genome-wide discovery and analysis of human seven transmembrane helix receptor genes.</title>
        <authorList>
            <person name="Suwa M."/>
            <person name="Sato T."/>
            <person name="Okouchi I."/>
            <person name="Arita M."/>
            <person name="Futami K."/>
            <person name="Matsumoto S."/>
            <person name="Tsutsumi S."/>
            <person name="Aburatani H."/>
            <person name="Asai K."/>
            <person name="Akiyama Y."/>
        </authorList>
    </citation>
    <scope>NUCLEOTIDE SEQUENCE [GENOMIC DNA]</scope>
</reference>
<reference key="3">
    <citation type="journal article" date="2004" name="Nat. Genet.">
        <title>Complete sequencing and characterization of 21,243 full-length human cDNAs.</title>
        <authorList>
            <person name="Ota T."/>
            <person name="Suzuki Y."/>
            <person name="Nishikawa T."/>
            <person name="Otsuki T."/>
            <person name="Sugiyama T."/>
            <person name="Irie R."/>
            <person name="Wakamatsu A."/>
            <person name="Hayashi K."/>
            <person name="Sato H."/>
            <person name="Nagai K."/>
            <person name="Kimura K."/>
            <person name="Makita H."/>
            <person name="Sekine M."/>
            <person name="Obayashi M."/>
            <person name="Nishi T."/>
            <person name="Shibahara T."/>
            <person name="Tanaka T."/>
            <person name="Ishii S."/>
            <person name="Yamamoto J."/>
            <person name="Saito K."/>
            <person name="Kawai Y."/>
            <person name="Isono Y."/>
            <person name="Nakamura Y."/>
            <person name="Nagahari K."/>
            <person name="Murakami K."/>
            <person name="Yasuda T."/>
            <person name="Iwayanagi T."/>
            <person name="Wagatsuma M."/>
            <person name="Shiratori A."/>
            <person name="Sudo H."/>
            <person name="Hosoiri T."/>
            <person name="Kaku Y."/>
            <person name="Kodaira H."/>
            <person name="Kondo H."/>
            <person name="Sugawara M."/>
            <person name="Takahashi M."/>
            <person name="Kanda K."/>
            <person name="Yokoi T."/>
            <person name="Furuya T."/>
            <person name="Kikkawa E."/>
            <person name="Omura Y."/>
            <person name="Abe K."/>
            <person name="Kamihara K."/>
            <person name="Katsuta N."/>
            <person name="Sato K."/>
            <person name="Tanikawa M."/>
            <person name="Yamazaki M."/>
            <person name="Ninomiya K."/>
            <person name="Ishibashi T."/>
            <person name="Yamashita H."/>
            <person name="Murakawa K."/>
            <person name="Fujimori K."/>
            <person name="Tanai H."/>
            <person name="Kimata M."/>
            <person name="Watanabe M."/>
            <person name="Hiraoka S."/>
            <person name="Chiba Y."/>
            <person name="Ishida S."/>
            <person name="Ono Y."/>
            <person name="Takiguchi S."/>
            <person name="Watanabe S."/>
            <person name="Yosida M."/>
            <person name="Hotuta T."/>
            <person name="Kusano J."/>
            <person name="Kanehori K."/>
            <person name="Takahashi-Fujii A."/>
            <person name="Hara H."/>
            <person name="Tanase T.-O."/>
            <person name="Nomura Y."/>
            <person name="Togiya S."/>
            <person name="Komai F."/>
            <person name="Hara R."/>
            <person name="Takeuchi K."/>
            <person name="Arita M."/>
            <person name="Imose N."/>
            <person name="Musashino K."/>
            <person name="Yuuki H."/>
            <person name="Oshima A."/>
            <person name="Sasaki N."/>
            <person name="Aotsuka S."/>
            <person name="Yoshikawa Y."/>
            <person name="Matsunawa H."/>
            <person name="Ichihara T."/>
            <person name="Shiohata N."/>
            <person name="Sano S."/>
            <person name="Moriya S."/>
            <person name="Momiyama H."/>
            <person name="Satoh N."/>
            <person name="Takami S."/>
            <person name="Terashima Y."/>
            <person name="Suzuki O."/>
            <person name="Nakagawa S."/>
            <person name="Senoh A."/>
            <person name="Mizoguchi H."/>
            <person name="Goto Y."/>
            <person name="Shimizu F."/>
            <person name="Wakebe H."/>
            <person name="Hishigaki H."/>
            <person name="Watanabe T."/>
            <person name="Sugiyama A."/>
            <person name="Takemoto M."/>
            <person name="Kawakami B."/>
            <person name="Yamazaki M."/>
            <person name="Watanabe K."/>
            <person name="Kumagai A."/>
            <person name="Itakura S."/>
            <person name="Fukuzumi Y."/>
            <person name="Fujimori Y."/>
            <person name="Komiyama M."/>
            <person name="Tashiro H."/>
            <person name="Tanigami A."/>
            <person name="Fujiwara T."/>
            <person name="Ono T."/>
            <person name="Yamada K."/>
            <person name="Fujii Y."/>
            <person name="Ozaki K."/>
            <person name="Hirao M."/>
            <person name="Ohmori Y."/>
            <person name="Kawabata A."/>
            <person name="Hikiji T."/>
            <person name="Kobatake N."/>
            <person name="Inagaki H."/>
            <person name="Ikema Y."/>
            <person name="Okamoto S."/>
            <person name="Okitani R."/>
            <person name="Kawakami T."/>
            <person name="Noguchi S."/>
            <person name="Itoh T."/>
            <person name="Shigeta K."/>
            <person name="Senba T."/>
            <person name="Matsumura K."/>
            <person name="Nakajima Y."/>
            <person name="Mizuno T."/>
            <person name="Morinaga M."/>
            <person name="Sasaki M."/>
            <person name="Togashi T."/>
            <person name="Oyama M."/>
            <person name="Hata H."/>
            <person name="Watanabe M."/>
            <person name="Komatsu T."/>
            <person name="Mizushima-Sugano J."/>
            <person name="Satoh T."/>
            <person name="Shirai Y."/>
            <person name="Takahashi Y."/>
            <person name="Nakagawa K."/>
            <person name="Okumura K."/>
            <person name="Nagase T."/>
            <person name="Nomura N."/>
            <person name="Kikuchi H."/>
            <person name="Masuho Y."/>
            <person name="Yamashita R."/>
            <person name="Nakai K."/>
            <person name="Yada T."/>
            <person name="Nakamura Y."/>
            <person name="Ohara O."/>
            <person name="Isogai T."/>
            <person name="Sugano S."/>
        </authorList>
    </citation>
    <scope>NUCLEOTIDE SEQUENCE [LARGE SCALE MRNA] (ISOFORM 6)</scope>
    <scope>VARIANT PHE-614</scope>
</reference>
<reference key="4">
    <citation type="journal article" date="2004" name="Nature">
        <title>The DNA sequence and biology of human chromosome 19.</title>
        <authorList>
            <person name="Grimwood J."/>
            <person name="Gordon L.A."/>
            <person name="Olsen A.S."/>
            <person name="Terry A."/>
            <person name="Schmutz J."/>
            <person name="Lamerdin J.E."/>
            <person name="Hellsten U."/>
            <person name="Goodstein D."/>
            <person name="Couronne O."/>
            <person name="Tran-Gyamfi M."/>
            <person name="Aerts A."/>
            <person name="Altherr M."/>
            <person name="Ashworth L."/>
            <person name="Bajorek E."/>
            <person name="Black S."/>
            <person name="Branscomb E."/>
            <person name="Caenepeel S."/>
            <person name="Carrano A.V."/>
            <person name="Caoile C."/>
            <person name="Chan Y.M."/>
            <person name="Christensen M."/>
            <person name="Cleland C.A."/>
            <person name="Copeland A."/>
            <person name="Dalin E."/>
            <person name="Dehal P."/>
            <person name="Denys M."/>
            <person name="Detter J.C."/>
            <person name="Escobar J."/>
            <person name="Flowers D."/>
            <person name="Fotopulos D."/>
            <person name="Garcia C."/>
            <person name="Georgescu A.M."/>
            <person name="Glavina T."/>
            <person name="Gomez M."/>
            <person name="Gonzales E."/>
            <person name="Groza M."/>
            <person name="Hammon N."/>
            <person name="Hawkins T."/>
            <person name="Haydu L."/>
            <person name="Ho I."/>
            <person name="Huang W."/>
            <person name="Israni S."/>
            <person name="Jett J."/>
            <person name="Kadner K."/>
            <person name="Kimball H."/>
            <person name="Kobayashi A."/>
            <person name="Larionov V."/>
            <person name="Leem S.-H."/>
            <person name="Lopez F."/>
            <person name="Lou Y."/>
            <person name="Lowry S."/>
            <person name="Malfatti S."/>
            <person name="Martinez D."/>
            <person name="McCready P.M."/>
            <person name="Medina C."/>
            <person name="Morgan J."/>
            <person name="Nelson K."/>
            <person name="Nolan M."/>
            <person name="Ovcharenko I."/>
            <person name="Pitluck S."/>
            <person name="Pollard M."/>
            <person name="Popkie A.P."/>
            <person name="Predki P."/>
            <person name="Quan G."/>
            <person name="Ramirez L."/>
            <person name="Rash S."/>
            <person name="Retterer J."/>
            <person name="Rodriguez A."/>
            <person name="Rogers S."/>
            <person name="Salamov A."/>
            <person name="Salazar A."/>
            <person name="She X."/>
            <person name="Smith D."/>
            <person name="Slezak T."/>
            <person name="Solovyev V."/>
            <person name="Thayer N."/>
            <person name="Tice H."/>
            <person name="Tsai M."/>
            <person name="Ustaszewska A."/>
            <person name="Vo N."/>
            <person name="Wagner M."/>
            <person name="Wheeler J."/>
            <person name="Wu K."/>
            <person name="Xie G."/>
            <person name="Yang J."/>
            <person name="Dubchak I."/>
            <person name="Furey T.S."/>
            <person name="DeJong P."/>
            <person name="Dickson M."/>
            <person name="Gordon D."/>
            <person name="Eichler E.E."/>
            <person name="Pennacchio L.A."/>
            <person name="Richardson P."/>
            <person name="Stubbs L."/>
            <person name="Rokhsar D.S."/>
            <person name="Myers R.M."/>
            <person name="Rubin E.M."/>
            <person name="Lucas S.M."/>
        </authorList>
    </citation>
    <scope>NUCLEOTIDE SEQUENCE [LARGE SCALE GENOMIC DNA]</scope>
    <scope>VARIANT PHE-614</scope>
</reference>
<reference key="5">
    <citation type="journal article" date="2003" name="FEBS Lett.">
        <title>Proteolytic cleavage of the EMR2 receptor requires both the extracellular stalk and the GPS motif.</title>
        <authorList>
            <person name="Chang G.-W."/>
            <person name="Stacey M."/>
            <person name="Kwakkenbos M.J."/>
            <person name="Hamann J."/>
            <person name="Gordon S."/>
            <person name="Lin H.-H."/>
        </authorList>
    </citation>
    <scope>PROTEIN SEQUENCE OF 518-527</scope>
    <scope>PROTEOLYTIC PROCESSING</scope>
    <scope>MUTAGENESIS OF SER-518</scope>
</reference>
<reference key="6">
    <citation type="journal article" date="2002" name="J. Leukoc. Biol.">
        <title>The human EGF-TM7 family member EMR2 is a heterodimeric receptor expressed on myeloid cells.</title>
        <authorList>
            <person name="Kwakkenbos M.J."/>
            <person name="Chang G.-W."/>
            <person name="Lin H.-H."/>
            <person name="Pouwels W."/>
            <person name="de Jong E.C."/>
            <person name="van Lier R.A.W."/>
            <person name="Gordon S."/>
            <person name="Hamann J."/>
        </authorList>
    </citation>
    <scope>CHARACTERIZATION</scope>
    <scope>TISSUE SPECIFICITY</scope>
</reference>
<reference key="7">
    <citation type="journal article" date="2003" name="Blood">
        <title>The epidermal growth factor-like domains of the human EMR2 receptor mediate cell attachment through chondroitin sulfate glycosaminoglycans.</title>
        <authorList>
            <person name="Stacey M."/>
            <person name="Chang G.-W."/>
            <person name="Davies J.Q."/>
            <person name="Kwakkenbos M.J."/>
            <person name="Sanderson R.D."/>
            <person name="Hamann J."/>
            <person name="Gordon S."/>
            <person name="Lin H.-H."/>
        </authorList>
    </citation>
    <scope>FUNCTION</scope>
    <scope>INTERACTION WITH CHONDROITIN SULFATE</scope>
</reference>
<reference key="8">
    <citation type="journal article" date="2004" name="J. Biol. Chem.">
        <title>Autocatalytic cleavage of the EMR2 receptor occurs at a conserved G protein-coupled receptor proteolytic site motif.</title>
        <authorList>
            <person name="Lin H.H."/>
            <person name="Chang G.W."/>
            <person name="Davies J.Q."/>
            <person name="Stacey M."/>
            <person name="Harris J."/>
            <person name="Gordon S."/>
        </authorList>
    </citation>
    <scope>AUTOPROTEOLYTIC CLEAVAGE</scope>
    <scope>SUBUNIT</scope>
</reference>
<reference key="9">
    <citation type="journal article" date="2008" name="FASEB J.">
        <title>Ligation of the adhesion-GPCR EMR2 regulates human neutrophil function.</title>
        <authorList>
            <person name="Yona S."/>
            <person name="Lin H.H."/>
            <person name="Dri P."/>
            <person name="Davies J.Q."/>
            <person name="Hayhoe R.P."/>
            <person name="Lewis S.M."/>
            <person name="Heinsbroek S.E."/>
            <person name="Brown K.A."/>
            <person name="Perretti M."/>
            <person name="Hamann J."/>
            <person name="Treacher D.F."/>
            <person name="Gordon S."/>
            <person name="Stacey M."/>
        </authorList>
    </citation>
    <scope>FUNCTION</scope>
    <scope>SUBCELLULAR LOCATION</scope>
</reference>
<reference key="10">
    <citation type="journal article" date="2012" name="FEBS Lett.">
        <title>Signaling property study of adhesion G-protein-coupled receptors.</title>
        <authorList>
            <person name="Gupte J."/>
            <person name="Swaminath G."/>
            <person name="Danao J."/>
            <person name="Tian H."/>
            <person name="Li Y."/>
            <person name="Wu X."/>
        </authorList>
    </citation>
    <scope>FUNCTION</scope>
</reference>
<reference key="11">
    <citation type="journal article" date="2012" name="Mol. Cell. Biol.">
        <title>Activation of myeloid cell-specific adhesion class G protein-coupled receptor EMR2 via ligation-induced translocation and interaction of receptor subunits in lipid raft microdomains.</title>
        <authorList>
            <person name="Huang Y.S."/>
            <person name="Chiang N.Y."/>
            <person name="Hu C.H."/>
            <person name="Hsiao C.C."/>
            <person name="Cheng K.F."/>
            <person name="Tsai W.P."/>
            <person name="Yona S."/>
            <person name="Stacey M."/>
            <person name="Gordon S."/>
            <person name="Chang G.W."/>
            <person name="Lin H.H."/>
        </authorList>
    </citation>
    <scope>FUNCTION</scope>
    <scope>SUBCELLULAR LOCATION</scope>
</reference>
<reference key="12">
    <citation type="journal article" date="2015" name="Pharmacol. Rev.">
        <title>International union of basic and clinical pharmacology. XCIV. Adhesion G protein-coupled receptors.</title>
        <authorList>
            <person name="Hamann J."/>
            <person name="Aust G."/>
            <person name="Arac D."/>
            <person name="Engel F.B."/>
            <person name="Formstone C."/>
            <person name="Fredriksson R."/>
            <person name="Hall R.A."/>
            <person name="Harty B.L."/>
            <person name="Kirchhoff C."/>
            <person name="Knapp B."/>
            <person name="Krishnan A."/>
            <person name="Liebscher I."/>
            <person name="Lin H.H."/>
            <person name="Martinelli D.C."/>
            <person name="Monk K.R."/>
            <person name="Peeters M.C."/>
            <person name="Piao X."/>
            <person name="Promel S."/>
            <person name="Schoneberg T."/>
            <person name="Schwartz T.W."/>
            <person name="Singer K."/>
            <person name="Stacey M."/>
            <person name="Ushkaryov Y.A."/>
            <person name="Vallon M."/>
            <person name="Wolfrum U."/>
            <person name="Wright M.W."/>
            <person name="Xu L."/>
            <person name="Langenhan T."/>
            <person name="Schioth H.B."/>
        </authorList>
    </citation>
    <scope>NOMENCLATURE</scope>
</reference>
<reference key="13">
    <citation type="journal article" date="2016" name="N. Engl. J. Med.">
        <title>Vibratory urticaria associated with a missense variant in ADGRE2.</title>
        <authorList>
            <person name="Boyden S.E."/>
            <person name="Desai A."/>
            <person name="Cruse G."/>
            <person name="Young M.L."/>
            <person name="Bolan H.C."/>
            <person name="Scott L.M."/>
            <person name="Eisch A.R."/>
            <person name="Long R.D."/>
            <person name="Lee C.C."/>
            <person name="Satorius C.L."/>
            <person name="Pakstis A.J."/>
            <person name="Olivera A."/>
            <person name="Mullikin J.C."/>
            <person name="Chouery E."/>
            <person name="Megarbane A."/>
            <person name="Medlej-Hashim M."/>
            <person name="Kidd K.K."/>
            <person name="Kastner D.L."/>
            <person name="Metcalfe D.D."/>
            <person name="Komarow H.D."/>
        </authorList>
    </citation>
    <scope>INVOLVEMENT IN VBU</scope>
    <scope>FUNCTION</scope>
    <scope>SUBCELLULAR LOCATION</scope>
    <scope>TISSUE SPECIFICITY</scope>
    <scope>VARIANT VBU TYR-492</scope>
    <scope>CHARACTERIZATION OF VARIANT VBU TYR-492</scope>
</reference>
<reference key="14">
    <citation type="journal article" date="2007" name="J. Biol. Chem.">
        <title>Structural and functional characterization of a novel T cell receptor co-regulatory protein complex, CD97-CD55.</title>
        <authorList>
            <person name="Abbott R.J."/>
            <person name="Spendlove I."/>
            <person name="Roversi P."/>
            <person name="Fitzgibbon H."/>
            <person name="Knott V."/>
            <person name="Teriete P."/>
            <person name="McDonnell J.M."/>
            <person name="Handford P.A."/>
            <person name="Lea S.M."/>
        </authorList>
    </citation>
    <scope>X-RAY CRYSTALLOGRAPHY (1.9 ANGSTROMS) OF 25-260</scope>
    <scope>INTERACTION WITH CD55</scope>
    <scope>CALCIUM-BINDING</scope>
    <scope>DISULFIDE BONDS</scope>
</reference>
<gene>
    <name evidence="19" type="primary">ADGRE2</name>
    <name type="synonym">EMR2</name>
</gene>
<comment type="function">
    <text evidence="6 12 13 14 15">Cell surface receptor that binds to the chondroitin sulfate moiety of glycosaminoglycan chains and promotes cell attachment. Promotes granulocyte chemotaxis, degranulation and adhesion. In macrophages, promotes the release of inflammatory cytokines, including IL8 and TNF. Signals probably through G-proteins. Is a regulator of mast cell degranulation (PubMed:26841242).</text>
</comment>
<comment type="subunit">
    <text evidence="6 10 11">Forms a heterodimer, consisting of a large extracellular region non-covalently linked to a seven-transmembrane moiety. Interacts with chondroitin sulfate; the interaction with chondroitin sulfate is calcium-dependent. Interacts with CD55.</text>
</comment>
<comment type="interaction">
    <interactant intactId="EBI-11277970">
        <id>Q9UHX3</id>
    </interactant>
    <interactant intactId="EBI-13059134">
        <id>Q13520</id>
        <label>AQP6</label>
    </interactant>
    <organismsDiffer>false</organismsDiffer>
    <experiments>3</experiments>
</comment>
<comment type="interaction">
    <interactant intactId="EBI-11277970">
        <id>Q9UHX3</id>
    </interactant>
    <interactant intactId="EBI-700794">
        <id>Q13323</id>
        <label>BIK</label>
    </interactant>
    <organismsDiffer>false</organismsDiffer>
    <experiments>3</experiments>
</comment>
<comment type="interaction">
    <interactant intactId="EBI-11277970">
        <id>Q9UHX3</id>
    </interactant>
    <interactant intactId="EBI-947033">
        <id>Q8WV48</id>
        <label>CCDC107</label>
    </interactant>
    <organismsDiffer>false</organismsDiffer>
    <experiments>3</experiments>
</comment>
<comment type="interaction">
    <interactant intactId="EBI-11277970">
        <id>Q9UHX3</id>
    </interactant>
    <interactant intactId="EBI-3935840">
        <id>Q03591</id>
        <label>CFHR1</label>
    </interactant>
    <organismsDiffer>false</organismsDiffer>
    <experiments>5</experiments>
</comment>
<comment type="interaction">
    <interactant intactId="EBI-11277970">
        <id>Q9UHX3</id>
    </interactant>
    <interactant intactId="EBI-6942903">
        <id>Q96BA8</id>
        <label>CREB3L1</label>
    </interactant>
    <organismsDiffer>false</organismsDiffer>
    <experiments>3</experiments>
</comment>
<comment type="interaction">
    <interactant intactId="EBI-11277970">
        <id>Q9UHX3</id>
    </interactant>
    <interactant intactId="EBI-18535450">
        <id>Q9GZR5</id>
        <label>ELOVL4</label>
    </interactant>
    <organismsDiffer>false</organismsDiffer>
    <experiments>3</experiments>
</comment>
<comment type="interaction">
    <interactant intactId="EBI-11277970">
        <id>Q9UHX3</id>
    </interactant>
    <interactant intactId="EBI-10285373">
        <id>A1L3X0</id>
        <label>ELOVL7</label>
    </interactant>
    <organismsDiffer>false</organismsDiffer>
    <experiments>3</experiments>
</comment>
<comment type="interaction">
    <interactant intactId="EBI-11277970">
        <id>Q9UHX3</id>
    </interactant>
    <interactant intactId="EBI-18304435">
        <id>Q5JX71</id>
        <label>FAM209A</label>
    </interactant>
    <organismsDiffer>false</organismsDiffer>
    <experiments>3</experiments>
</comment>
<comment type="interaction">
    <interactant intactId="EBI-11277970">
        <id>Q9UHX3</id>
    </interactant>
    <interactant intactId="EBI-18053395">
        <id>Q7Z5P4</id>
        <label>HSD17B13</label>
    </interactant>
    <organismsDiffer>false</organismsDiffer>
    <experiments>3</experiments>
</comment>
<comment type="interaction">
    <interactant intactId="EBI-11277970">
        <id>Q9UHX3</id>
    </interactant>
    <interactant intactId="EBI-8632435">
        <id>P43628</id>
        <label>KIR2DL3</label>
    </interactant>
    <organismsDiffer>false</organismsDiffer>
    <experiments>3</experiments>
</comment>
<comment type="interaction">
    <interactant intactId="EBI-11277970">
        <id>Q9UHX3</id>
    </interactant>
    <interactant intactId="EBI-2684600">
        <id>O60337</id>
        <label>MARCHF6</label>
    </interactant>
    <organismsDiffer>false</organismsDiffer>
    <experiments>3</experiments>
</comment>
<comment type="interaction">
    <interactant intactId="EBI-11277970">
        <id>Q9UHX3</id>
    </interactant>
    <interactant intactId="EBI-3920969">
        <id>Q6N075</id>
        <label>MFSD5</label>
    </interactant>
    <organismsDiffer>false</organismsDiffer>
    <experiments>3</experiments>
</comment>
<comment type="interaction">
    <interactant intactId="EBI-11277970">
        <id>Q9UHX3</id>
    </interactant>
    <interactant intactId="EBI-6163737">
        <id>Q8N4V1</id>
        <label>MMGT1</label>
    </interactant>
    <organismsDiffer>false</organismsDiffer>
    <experiments>3</experiments>
</comment>
<comment type="interaction">
    <interactant intactId="EBI-11277970">
        <id>Q9UHX3</id>
    </interactant>
    <interactant intactId="EBI-7825321">
        <id>Q96E29</id>
        <label>MTERF3</label>
    </interactant>
    <organismsDiffer>false</organismsDiffer>
    <experiments>3</experiments>
</comment>
<comment type="interaction">
    <interactant intactId="EBI-11277970">
        <id>Q9UHX3</id>
    </interactant>
    <interactant intactId="EBI-3920694">
        <id>Q9NR31</id>
        <label>SAR1A</label>
    </interactant>
    <organismsDiffer>false</organismsDiffer>
    <experiments>3</experiments>
</comment>
<comment type="interaction">
    <interactant intactId="EBI-11277970">
        <id>Q9UHX3</id>
    </interactant>
    <interactant intactId="EBI-5235586">
        <id>Q8TBB6</id>
        <label>SLC7A14</label>
    </interactant>
    <organismsDiffer>false</organismsDiffer>
    <experiments>3</experiments>
</comment>
<comment type="interaction">
    <interactant intactId="EBI-11277970">
        <id>Q9UHX3</id>
    </interactant>
    <interactant intactId="EBI-12947623">
        <id>Q96MV1</id>
        <label>TLCD4</label>
    </interactant>
    <organismsDiffer>false</organismsDiffer>
    <experiments>3</experiments>
</comment>
<comment type="interaction">
    <interactant intactId="EBI-11277970">
        <id>Q9UHX3</id>
    </interactant>
    <interactant intactId="EBI-11742770">
        <id>Q96HE8</id>
        <label>TMEM80</label>
    </interactant>
    <organismsDiffer>false</organismsDiffer>
    <experiments>3</experiments>
</comment>
<comment type="subcellular location">
    <subcellularLocation>
        <location evidence="13 15">Cell membrane</location>
        <topology>Multi-pass membrane protein</topology>
    </subcellularLocation>
    <subcellularLocation>
        <location evidence="12">Cell projection</location>
        <location evidence="12">Ruffle membrane</location>
        <topology>Multi-pass membrane protein</topology>
    </subcellularLocation>
    <text evidence="12">Localized at the leading edge of migrating cells.</text>
</comment>
<comment type="alternative products">
    <event type="alternative splicing"/>
    <isoform>
        <id>Q9UHX3-1</id>
        <name>1</name>
        <sequence type="displayed"/>
    </isoform>
    <isoform>
        <id>Q9UHX3-2</id>
        <name>2</name>
        <sequence type="described" ref="VSP_041367"/>
    </isoform>
    <isoform>
        <id>Q9UHX3-3</id>
        <name>3</name>
        <sequence type="described" ref="VSP_041366"/>
    </isoform>
    <isoform>
        <id>Q9UHX3-4</id>
        <name>4</name>
        <sequence type="described" ref="VSP_041365"/>
    </isoform>
    <isoform>
        <id>Q9UHX3-5</id>
        <name>5</name>
        <sequence type="described" ref="VSP_041364"/>
    </isoform>
    <isoform>
        <id>Q9UHX3-6</id>
        <name>6</name>
        <sequence type="described" ref="VSP_047535"/>
    </isoform>
    <text>A number of isoforms are probably produced. A soluble form due to a frameshift which introduced a stop codon immediately before the first TM domain is also detected.</text>
</comment>
<comment type="tissue specificity">
    <text evidence="4 5 15">Expression is restricted to myeloid cells. Highest expression was found in peripheral blood leukocytes, followed by spleen and lymph nodes, with intermediate to low levels in thymus, bone marrow, fetal liver, placenta, and lung, and no expression in heart, brain, skeletal muscle, kidney, or pancreas. Expression is also detected in monocyte/macrophage and Jurkat cell lines but not in other cell lines tested. High expression in mast cells (PubMed:26841242).</text>
</comment>
<comment type="domain">
    <text evidence="7">The GPS region of the GAIN-B domain is necessary, but not sufficient for receptor cleavage, which require the entire extracellular stalk.</text>
</comment>
<comment type="domain">
    <text>Binding to chondroitin sulfate is mediated by the fourth EGF domain.</text>
</comment>
<comment type="PTM">
    <text evidence="7">Autoproteolytically cleaved into 2 subunits, an extracellular alpha subunit and a seven-transmembrane beta subunit.</text>
</comment>
<comment type="disease" evidence="15">
    <disease id="DI-04656">
        <name>Vibratory urticaria</name>
        <acronym>VBU</acronym>
        <description>An autosomal dominant disorder characterized by localized hives and systemic manifestations in response to dermal vibration, with coincident degranulation of mast cells and increased histamine levels in serum.</description>
        <dbReference type="MIM" id="125630"/>
    </disease>
    <text>The disease is caused by variants affecting the gene represented in this entry.</text>
</comment>
<comment type="miscellaneous">
    <text evidence="18">Has no murine ortholog.</text>
</comment>
<comment type="similarity">
    <text evidence="18">Belongs to the G-protein coupled receptor 2 family. Adhesion G-protein coupled receptor (ADGR) subfamily.</text>
</comment>
<comment type="sequence caution" evidence="18">
    <conflict type="erroneous gene model prediction">
        <sequence resource="EMBL-CDS" id="BAC06146"/>
    </conflict>
</comment>
<evidence type="ECO:0000255" key="1"/>
<evidence type="ECO:0000255" key="2">
    <source>
        <dbReference type="PROSITE-ProRule" id="PRU00076"/>
    </source>
</evidence>
<evidence type="ECO:0000255" key="3">
    <source>
        <dbReference type="PROSITE-ProRule" id="PRU00098"/>
    </source>
</evidence>
<evidence type="ECO:0000269" key="4">
    <source>
    </source>
</evidence>
<evidence type="ECO:0000269" key="5">
    <source>
    </source>
</evidence>
<evidence type="ECO:0000269" key="6">
    <source>
    </source>
</evidence>
<evidence type="ECO:0000269" key="7">
    <source>
    </source>
</evidence>
<evidence type="ECO:0000269" key="8">
    <source>
    </source>
</evidence>
<evidence type="ECO:0000269" key="9">
    <source>
    </source>
</evidence>
<evidence type="ECO:0000269" key="10">
    <source>
    </source>
</evidence>
<evidence type="ECO:0000269" key="11">
    <source>
    </source>
</evidence>
<evidence type="ECO:0000269" key="12">
    <source>
    </source>
</evidence>
<evidence type="ECO:0000269" key="13">
    <source>
    </source>
</evidence>
<evidence type="ECO:0000269" key="14">
    <source>
    </source>
</evidence>
<evidence type="ECO:0000269" key="15">
    <source>
    </source>
</evidence>
<evidence type="ECO:0000303" key="16">
    <source>
    </source>
</evidence>
<evidence type="ECO:0000303" key="17">
    <source>
    </source>
</evidence>
<evidence type="ECO:0000305" key="18"/>
<evidence type="ECO:0000312" key="19">
    <source>
        <dbReference type="HGNC" id="HGNC:3337"/>
    </source>
</evidence>
<evidence type="ECO:0007829" key="20">
    <source>
        <dbReference type="PDB" id="2BO2"/>
    </source>
</evidence>
<evidence type="ECO:0007829" key="21">
    <source>
        <dbReference type="PDB" id="2BOU"/>
    </source>
</evidence>
<accession>Q9UHX3</accession>
<accession>B4DQ96</accession>
<accession>E7ESD7</accession>
<accession>E9PBR1</accession>
<accession>E9PEL6</accession>
<accession>E9PFQ5</accession>
<accession>E9PG91</accession>
<accession>Q8NG96</accession>
<accession>Q9Y4B1</accession>
<feature type="signal peptide" evidence="1">
    <location>
        <begin position="1"/>
        <end position="23"/>
    </location>
</feature>
<feature type="chain" id="PRO_0000012875" description="Adhesion G protein-coupled receptor E2">
    <location>
        <begin position="24"/>
        <end position="823"/>
    </location>
</feature>
<feature type="topological domain" description="Extracellular" evidence="18">
    <location>
        <begin position="24"/>
        <end position="540"/>
    </location>
</feature>
<feature type="transmembrane region" description="Helical; Name=1" evidence="1">
    <location>
        <begin position="541"/>
        <end position="561"/>
    </location>
</feature>
<feature type="topological domain" description="Cytoplasmic" evidence="18">
    <location>
        <begin position="562"/>
        <end position="569"/>
    </location>
</feature>
<feature type="transmembrane region" description="Helical; Name=2" evidence="1">
    <location>
        <begin position="570"/>
        <end position="590"/>
    </location>
</feature>
<feature type="topological domain" description="Extracellular" evidence="18">
    <location>
        <begin position="591"/>
        <end position="605"/>
    </location>
</feature>
<feature type="transmembrane region" description="Helical; Name=3" evidence="1">
    <location>
        <begin position="606"/>
        <end position="626"/>
    </location>
</feature>
<feature type="topological domain" description="Cytoplasmic" evidence="18">
    <location>
        <begin position="627"/>
        <end position="644"/>
    </location>
</feature>
<feature type="transmembrane region" description="Helical; Name=4" evidence="1">
    <location>
        <begin position="645"/>
        <end position="665"/>
    </location>
</feature>
<feature type="topological domain" description="Extracellular" evidence="18">
    <location>
        <begin position="666"/>
        <end position="683"/>
    </location>
</feature>
<feature type="transmembrane region" description="Helical; Name=5" evidence="1">
    <location>
        <begin position="684"/>
        <end position="704"/>
    </location>
</feature>
<feature type="topological domain" description="Cytoplasmic" evidence="18">
    <location>
        <begin position="705"/>
        <end position="735"/>
    </location>
</feature>
<feature type="transmembrane region" description="Helical; Name=6" evidence="1">
    <location>
        <begin position="736"/>
        <end position="756"/>
    </location>
</feature>
<feature type="topological domain" description="Extracellular" evidence="18">
    <location>
        <begin position="757"/>
        <end position="760"/>
    </location>
</feature>
<feature type="transmembrane region" description="Helical; Name=7" evidence="1">
    <location>
        <begin position="761"/>
        <end position="781"/>
    </location>
</feature>
<feature type="topological domain" description="Cytoplasmic" evidence="18">
    <location>
        <begin position="782"/>
        <end position="823"/>
    </location>
</feature>
<feature type="domain" description="EGF-like 1" evidence="2">
    <location>
        <begin position="25"/>
        <end position="66"/>
    </location>
</feature>
<feature type="domain" description="EGF-like 2; calcium-binding" evidence="2">
    <location>
        <begin position="67"/>
        <end position="118"/>
    </location>
</feature>
<feature type="domain" description="EGF-like 3; calcium-binding" evidence="2">
    <location>
        <begin position="119"/>
        <end position="162"/>
    </location>
</feature>
<feature type="domain" description="EGF-like 4; calcium-binding" evidence="2">
    <location>
        <begin position="163"/>
        <end position="211"/>
    </location>
</feature>
<feature type="domain" description="EGF-like 5; calcium-binding" evidence="2">
    <location>
        <begin position="212"/>
        <end position="260"/>
    </location>
</feature>
<feature type="domain" description="GAIN-B" evidence="3">
    <location>
        <begin position="354"/>
        <end position="530"/>
    </location>
</feature>
<feature type="region of interest" description="GPS" evidence="3">
    <location>
        <begin position="482"/>
        <end position="530"/>
    </location>
</feature>
<feature type="site" description="Cleavage; by autolysis" evidence="3 10">
    <location>
        <begin position="517"/>
        <end position="518"/>
    </location>
</feature>
<feature type="glycosylation site" description="N-linked (GlcNAc...) asparagine" evidence="1">
    <location>
        <position position="41"/>
    </location>
</feature>
<feature type="glycosylation site" description="N-linked (GlcNAc...) asparagine" evidence="1">
    <location>
        <position position="111"/>
    </location>
</feature>
<feature type="glycosylation site" description="N-linked (GlcNAc...) asparagine" evidence="1">
    <location>
        <position position="206"/>
    </location>
</feature>
<feature type="glycosylation site" description="N-linked (GlcNAc...) asparagine" evidence="1">
    <location>
        <position position="298"/>
    </location>
</feature>
<feature type="glycosylation site" description="N-linked (GlcNAc...) asparagine" evidence="1">
    <location>
        <position position="347"/>
    </location>
</feature>
<feature type="glycosylation site" description="N-linked (GlcNAc...) asparagine" evidence="1">
    <location>
        <position position="354"/>
    </location>
</feature>
<feature type="glycosylation site" description="N-linked (GlcNAc...) asparagine" evidence="1">
    <location>
        <position position="456"/>
    </location>
</feature>
<feature type="glycosylation site" description="N-linked (GlcNAc...) asparagine" evidence="1">
    <location>
        <position position="460"/>
    </location>
</feature>
<feature type="disulfide bond" evidence="2 11">
    <location>
        <begin position="29"/>
        <end position="39"/>
    </location>
</feature>
<feature type="disulfide bond" evidence="2 11">
    <location>
        <begin position="33"/>
        <end position="45"/>
    </location>
</feature>
<feature type="disulfide bond" evidence="2 11">
    <location>
        <begin position="47"/>
        <end position="65"/>
    </location>
</feature>
<feature type="disulfide bond" evidence="2 11">
    <location>
        <begin position="71"/>
        <end position="85"/>
    </location>
</feature>
<feature type="disulfide bond" evidence="2 11">
    <location>
        <begin position="79"/>
        <end position="94"/>
    </location>
</feature>
<feature type="disulfide bond" evidence="2 11">
    <location>
        <begin position="96"/>
        <end position="117"/>
    </location>
</feature>
<feature type="disulfide bond" evidence="2 11">
    <location>
        <begin position="123"/>
        <end position="136"/>
    </location>
</feature>
<feature type="disulfide bond" evidence="2 11">
    <location>
        <begin position="130"/>
        <end position="145"/>
    </location>
</feature>
<feature type="disulfide bond" evidence="2">
    <location>
        <begin position="147"/>
        <end position="161"/>
    </location>
</feature>
<feature type="disulfide bond" evidence="2">
    <location>
        <begin position="167"/>
        <end position="180"/>
    </location>
</feature>
<feature type="disulfide bond" evidence="2">
    <location>
        <begin position="174"/>
        <end position="189"/>
    </location>
</feature>
<feature type="disulfide bond" evidence="2">
    <location>
        <begin position="191"/>
        <end position="210"/>
    </location>
</feature>
<feature type="disulfide bond" evidence="2">
    <location>
        <begin position="216"/>
        <end position="229"/>
    </location>
</feature>
<feature type="disulfide bond" evidence="2">
    <location>
        <begin position="223"/>
        <end position="238"/>
    </location>
</feature>
<feature type="disulfide bond" evidence="2">
    <location>
        <begin position="240"/>
        <end position="259"/>
    </location>
</feature>
<feature type="disulfide bond" evidence="3">
    <location>
        <begin position="482"/>
        <end position="512"/>
    </location>
</feature>
<feature type="disulfide bond" evidence="3">
    <location>
        <begin position="500"/>
        <end position="514"/>
    </location>
</feature>
<feature type="splice variant" id="VSP_041364" description="In isoform 5." evidence="18">
    <location>
        <begin position="119"/>
        <end position="260"/>
    </location>
</feature>
<feature type="splice variant" id="VSP_041365" description="In isoform 4." evidence="18">
    <location>
        <begin position="119"/>
        <end position="211"/>
    </location>
</feature>
<feature type="splice variant" id="VSP_041366" description="In isoform 3." evidence="18">
    <location>
        <begin position="163"/>
        <end position="211"/>
    </location>
</feature>
<feature type="splice variant" id="VSP_041367" description="In isoform 2." evidence="18">
    <location>
        <begin position="397"/>
        <end position="407"/>
    </location>
</feature>
<feature type="splice variant" id="VSP_047535" description="In isoform 6." evidence="16">
    <location>
        <begin position="473"/>
        <end position="530"/>
    </location>
</feature>
<feature type="sequence variant" id="VAR_061229" description="In dbSNP:rs35612307.">
    <original>A</original>
    <variation>V</variation>
    <location>
        <position position="314"/>
    </location>
</feature>
<feature type="sequence variant" id="VAR_078578" description="In VBU; affects the regulation of mast cells degranulation; results in increased vibration-induced mast cells degranulation; no effect on localization to plasma membrane; dbSNP:rs199718602." evidence="15">
    <original>C</original>
    <variation>Y</variation>
    <location>
        <position position="492"/>
    </location>
</feature>
<feature type="sequence variant" id="VAR_026719" description="In dbSNP:rs4410209.">
    <original>T</original>
    <variation>I</variation>
    <location>
        <position position="605"/>
    </location>
</feature>
<feature type="sequence variant" id="VAR_026720" description="In dbSNP:rs2524383." evidence="4 8 9">
    <original>L</original>
    <variation>F</variation>
    <location>
        <position position="614"/>
    </location>
</feature>
<feature type="sequence variant" id="VAR_026721" description="In dbSNP:rs3752187.">
    <original>S</original>
    <variation>F</variation>
    <location>
        <position position="665"/>
    </location>
</feature>
<feature type="sequence variant" id="VAR_061230" description="In dbSNP:rs57865820.">
    <original>E</original>
    <variation>D</variation>
    <location>
        <position position="720"/>
    </location>
</feature>
<feature type="mutagenesis site" description="Abolishes cleavage." evidence="7">
    <original>S</original>
    <variation>A</variation>
    <location>
        <position position="518"/>
    </location>
</feature>
<feature type="sequence conflict" description="In Ref. 4; AAC05172." evidence="18" ref="4">
    <location>
        <position position="531"/>
    </location>
</feature>
<feature type="sequence conflict" description="In Ref. 2; BAC06146." evidence="18" ref="2">
    <original>N</original>
    <variation>R</variation>
    <location>
        <position position="823"/>
    </location>
</feature>
<feature type="strand" evidence="21">
    <location>
        <begin position="37"/>
        <end position="43"/>
    </location>
</feature>
<feature type="strand" evidence="21">
    <location>
        <begin position="45"/>
        <end position="47"/>
    </location>
</feature>
<feature type="strand" evidence="21">
    <location>
        <begin position="54"/>
        <end position="58"/>
    </location>
</feature>
<feature type="helix" evidence="21">
    <location>
        <begin position="70"/>
        <end position="72"/>
    </location>
</feature>
<feature type="strand" evidence="20">
    <location>
        <begin position="74"/>
        <end position="76"/>
    </location>
</feature>
<feature type="strand" evidence="21">
    <location>
        <begin position="83"/>
        <end position="87"/>
    </location>
</feature>
<feature type="strand" evidence="21">
    <location>
        <begin position="92"/>
        <end position="96"/>
    </location>
</feature>
<feature type="strand" evidence="21">
    <location>
        <begin position="100"/>
        <end position="102"/>
    </location>
</feature>
<feature type="strand" evidence="21">
    <location>
        <begin position="109"/>
        <end position="111"/>
    </location>
</feature>
<feature type="helix" evidence="21">
    <location>
        <begin position="112"/>
        <end position="114"/>
    </location>
</feature>
<feature type="strand" evidence="21">
    <location>
        <begin position="117"/>
        <end position="119"/>
    </location>
</feature>
<feature type="turn" evidence="21">
    <location>
        <begin position="217"/>
        <end position="219"/>
    </location>
</feature>
<feature type="strand" evidence="21">
    <location>
        <begin position="227"/>
        <end position="231"/>
    </location>
</feature>
<feature type="strand" evidence="21">
    <location>
        <begin position="236"/>
        <end position="239"/>
    </location>
</feature>
<feature type="strand" evidence="21">
    <location>
        <begin position="242"/>
        <end position="244"/>
    </location>
</feature>
<feature type="strand" evidence="20">
    <location>
        <begin position="248"/>
        <end position="250"/>
    </location>
</feature>
<feature type="strand" evidence="21">
    <location>
        <begin position="252"/>
        <end position="254"/>
    </location>
</feature>
<proteinExistence type="evidence at protein level"/>
<keyword id="KW-0002">3D-structure</keyword>
<keyword id="KW-0025">Alternative splicing</keyword>
<keyword id="KW-0068">Autocatalytic cleavage</keyword>
<keyword id="KW-0106">Calcium</keyword>
<keyword id="KW-0130">Cell adhesion</keyword>
<keyword id="KW-1003">Cell membrane</keyword>
<keyword id="KW-0966">Cell projection</keyword>
<keyword id="KW-0903">Direct protein sequencing</keyword>
<keyword id="KW-0225">Disease variant</keyword>
<keyword id="KW-1015">Disulfide bond</keyword>
<keyword id="KW-0245">EGF-like domain</keyword>
<keyword id="KW-0297">G-protein coupled receptor</keyword>
<keyword id="KW-0325">Glycoprotein</keyword>
<keyword id="KW-0395">Inflammatory response</keyword>
<keyword id="KW-0472">Membrane</keyword>
<keyword id="KW-1267">Proteomics identification</keyword>
<keyword id="KW-0675">Receptor</keyword>
<keyword id="KW-1185">Reference proteome</keyword>
<keyword id="KW-0677">Repeat</keyword>
<keyword id="KW-0732">Signal</keyword>
<keyword id="KW-0807">Transducer</keyword>
<keyword id="KW-0812">Transmembrane</keyword>
<keyword id="KW-1133">Transmembrane helix</keyword>
<sequence>MGGRVFLVFLAFCVWLTLPGAETQDSRGCARWCPQDSSCVNATACRCNPGFSSFSEIITTPMETCDDINECATLSKVSCGKFSDCWNTEGSYDCVCSPGYEPVSGAKTFKNESENTCQDVDECQQNPRLCKSYGTCVNTLGSYTCQCLPGFKLKPEDPKLCTDVNECTSGQNPCHSSTHCLNNVGSYQCRCRPGWQPIPGSPNGPNNTVCEDVDECSSGQHQCDSSTVCFNTVGSYSCRCRPGWKPRHGIPNNQKDTVCEDMTFSTWTPPPGVHSQTLSRFFDKVQDLGRDYKPGLANNTIQSILQALDELLEAPGDLETLPRLQQHCVASHLLDGLEDVLRGLSKNLSNGLLNFSYPAGTELSLEVQKQVDRSVTLRQNQAVMQLDWNQAQKSGDPGPSVVGLVSIPGMGKLLAEAPLVLEPEKQMLLHETHQGLLQDGSPILLSDVISAFLSNNDTQNLSSPVTFTFSHRSVIPRQKVLCVFWEHGQNGCGHWATTGCSTIGTRDTSTICRCTHLSSFAVLMAHYDVQEEDPVLTVITYMGLSVSLLCLLLAALTFLLCKAIQNTSTSLHLQLSLCLFLAHLLFLVAIDQTGHKVLCSIIAGTLHYLYLATLTWMLLEALYLFLTARNLTVVNYSSINRFMKKLMFPVGYGVPAVTVAISAASRPHLYGTPSRCWLQPEKGFIWGFLGPVCAIFSVNLVLFLVTLWILKNRLSSLNSEVSTLRNTRMLAFKATAQLFILGCTWCLGILQVGPAARVMAYLFTIINSLQGVFIFLVYCLLSQQVREQYGKWSKGIRKLKTESEMHTLSSSAKADTSKPSTVN</sequence>
<dbReference type="EMBL" id="AF114491">
    <property type="protein sequence ID" value="AAF21974.1"/>
    <property type="molecule type" value="mRNA"/>
</dbReference>
<dbReference type="EMBL" id="AB065931">
    <property type="protein sequence ID" value="BAC06146.1"/>
    <property type="status" value="ALT_SEQ"/>
    <property type="molecule type" value="Genomic_DNA"/>
</dbReference>
<dbReference type="EMBL" id="AK298700">
    <property type="protein sequence ID" value="BAG60858.1"/>
    <property type="molecule type" value="mRNA"/>
</dbReference>
<dbReference type="EMBL" id="AC004262">
    <property type="protein sequence ID" value="AAC05172.1"/>
    <property type="molecule type" value="Genomic_DNA"/>
</dbReference>
<dbReference type="EMBL" id="AC005327">
    <property type="status" value="NOT_ANNOTATED_CDS"/>
    <property type="molecule type" value="Genomic_DNA"/>
</dbReference>
<dbReference type="EMBL" id="AC090427">
    <property type="status" value="NOT_ANNOTATED_CDS"/>
    <property type="molecule type" value="Genomic_DNA"/>
</dbReference>
<dbReference type="CCDS" id="CCDS32933.1">
    <molecule id="Q9UHX3-4"/>
</dbReference>
<dbReference type="CCDS" id="CCDS32934.1">
    <molecule id="Q9UHX3-3"/>
</dbReference>
<dbReference type="CCDS" id="CCDS32935.1">
    <molecule id="Q9UHX3-1"/>
</dbReference>
<dbReference type="CCDS" id="CCDS59361.1">
    <molecule id="Q9UHX3-6"/>
</dbReference>
<dbReference type="RefSeq" id="NP_001257981.1">
    <molecule id="Q9UHX3-6"/>
    <property type="nucleotide sequence ID" value="NM_001271052.1"/>
</dbReference>
<dbReference type="RefSeq" id="NP_038475.2">
    <molecule id="Q9UHX3-1"/>
    <property type="nucleotide sequence ID" value="NM_013447.3"/>
</dbReference>
<dbReference type="RefSeq" id="NP_690880.1">
    <molecule id="Q9UHX3-3"/>
    <property type="nucleotide sequence ID" value="NM_152916.2"/>
</dbReference>
<dbReference type="RefSeq" id="NP_690881.1">
    <molecule id="Q9UHX3-4"/>
    <property type="nucleotide sequence ID" value="NM_152917.2"/>
</dbReference>
<dbReference type="RefSeq" id="XP_047294677.1">
    <molecule id="Q9UHX3-2"/>
    <property type="nucleotide sequence ID" value="XM_047438721.1"/>
</dbReference>
<dbReference type="PDB" id="2BO2">
    <property type="method" value="X-ray"/>
    <property type="resolution" value="2.60 A"/>
    <property type="chains" value="A/B=25-260"/>
</dbReference>
<dbReference type="PDB" id="2BOU">
    <property type="method" value="X-ray"/>
    <property type="resolution" value="1.90 A"/>
    <property type="chains" value="A=25-118, A=212-260"/>
</dbReference>
<dbReference type="PDB" id="2BOX">
    <property type="method" value="X-ray"/>
    <property type="resolution" value="2.50 A"/>
    <property type="chains" value="A=25-260"/>
</dbReference>
<dbReference type="PDBsum" id="2BO2"/>
<dbReference type="PDBsum" id="2BOU"/>
<dbReference type="PDBsum" id="2BOX"/>
<dbReference type="SMR" id="Q9UHX3"/>
<dbReference type="BioGRID" id="119041">
    <property type="interactions" value="49"/>
</dbReference>
<dbReference type="FunCoup" id="Q9UHX3">
    <property type="interactions" value="379"/>
</dbReference>
<dbReference type="IntAct" id="Q9UHX3">
    <property type="interactions" value="27"/>
</dbReference>
<dbReference type="STRING" id="9606.ENSP00000319883"/>
<dbReference type="MEROPS" id="P02.001"/>
<dbReference type="GlyConnect" id="993">
    <property type="glycosylation" value="2 N-Linked glycans (2 sites)"/>
</dbReference>
<dbReference type="GlyCosmos" id="Q9UHX3">
    <property type="glycosylation" value="10 sites, 3 glycans"/>
</dbReference>
<dbReference type="GlyGen" id="Q9UHX3">
    <property type="glycosylation" value="11 sites, 19 N-linked glycans (2 sites), 1 O-linked glycan (2 sites)"/>
</dbReference>
<dbReference type="iPTMnet" id="Q9UHX3"/>
<dbReference type="PhosphoSitePlus" id="Q9UHX3"/>
<dbReference type="BioMuta" id="ADGRE2"/>
<dbReference type="DMDM" id="108935835"/>
<dbReference type="jPOST" id="Q9UHX3"/>
<dbReference type="MassIVE" id="Q9UHX3"/>
<dbReference type="PaxDb" id="9606-ENSP00000319883"/>
<dbReference type="PeptideAtlas" id="Q9UHX3"/>
<dbReference type="ProteomicsDB" id="17966"/>
<dbReference type="ProteomicsDB" id="84434">
    <molecule id="Q9UHX3-1"/>
</dbReference>
<dbReference type="ProteomicsDB" id="84435">
    <molecule id="Q9UHX3-2"/>
</dbReference>
<dbReference type="ProteomicsDB" id="84436">
    <molecule id="Q9UHX3-3"/>
</dbReference>
<dbReference type="ProteomicsDB" id="84437">
    <molecule id="Q9UHX3-4"/>
</dbReference>
<dbReference type="ProteomicsDB" id="84438">
    <molecule id="Q9UHX3-5"/>
</dbReference>
<dbReference type="Antibodypedia" id="13808">
    <property type="antibodies" value="478 antibodies from 33 providers"/>
</dbReference>
<dbReference type="DNASU" id="30817"/>
<dbReference type="Ensembl" id="ENST00000315576.8">
    <molecule id="Q9UHX3-1"/>
    <property type="protein sequence ID" value="ENSP00000319883.3"/>
    <property type="gene ID" value="ENSG00000127507.18"/>
</dbReference>
<dbReference type="Ensembl" id="ENST00000392965.7">
    <molecule id="Q9UHX3-6"/>
    <property type="protein sequence ID" value="ENSP00000376692.3"/>
    <property type="gene ID" value="ENSG00000127507.18"/>
</dbReference>
<dbReference type="Ensembl" id="ENST00000594076.5">
    <molecule id="Q9UHX3-4"/>
    <property type="protein sequence ID" value="ENSP00000472735.1"/>
    <property type="gene ID" value="ENSG00000127507.18"/>
</dbReference>
<dbReference type="Ensembl" id="ENST00000594294.5">
    <molecule id="Q9UHX3-3"/>
    <property type="protein sequence ID" value="ENSP00000470725.1"/>
    <property type="gene ID" value="ENSG00000127507.18"/>
</dbReference>
<dbReference type="Ensembl" id="ENST00000595839.5">
    <molecule id="Q9UHX3-5"/>
    <property type="protein sequence ID" value="ENSP00000469277.1"/>
    <property type="gene ID" value="ENSG00000127507.18"/>
</dbReference>
<dbReference type="Ensembl" id="ENST00000596991.6">
    <molecule id="Q9UHX3-2"/>
    <property type="protein sequence ID" value="ENSP00000472280.2"/>
    <property type="gene ID" value="ENSG00000127507.18"/>
</dbReference>
<dbReference type="GeneID" id="30817"/>
<dbReference type="KEGG" id="hsa:30817"/>
<dbReference type="MANE-Select" id="ENST00000315576.8">
    <property type="protein sequence ID" value="ENSP00000319883.3"/>
    <property type="RefSeq nucleotide sequence ID" value="NM_013447.4"/>
    <property type="RefSeq protein sequence ID" value="NP_038475.2"/>
</dbReference>
<dbReference type="UCSC" id="uc002mzp.3">
    <molecule id="Q9UHX3-1"/>
    <property type="organism name" value="human"/>
</dbReference>
<dbReference type="AGR" id="HGNC:3337"/>
<dbReference type="CTD" id="30817"/>
<dbReference type="DisGeNET" id="30817"/>
<dbReference type="GeneCards" id="ADGRE2"/>
<dbReference type="HGNC" id="HGNC:3337">
    <property type="gene designation" value="ADGRE2"/>
</dbReference>
<dbReference type="HPA" id="ENSG00000127507">
    <property type="expression patterns" value="Tissue enhanced (lymphoid)"/>
</dbReference>
<dbReference type="MalaCards" id="ADGRE2"/>
<dbReference type="MIM" id="125630">
    <property type="type" value="phenotype"/>
</dbReference>
<dbReference type="MIM" id="606100">
    <property type="type" value="gene"/>
</dbReference>
<dbReference type="neXtProt" id="NX_Q9UHX3"/>
<dbReference type="OpenTargets" id="ENSG00000127507"/>
<dbReference type="Orphanet" id="493342">
    <property type="disease" value="Vibratory urticaria"/>
</dbReference>
<dbReference type="PharmGKB" id="PA27774"/>
<dbReference type="VEuPathDB" id="HostDB:ENSG00000127507"/>
<dbReference type="eggNOG" id="KOG4193">
    <property type="taxonomic scope" value="Eukaryota"/>
</dbReference>
<dbReference type="GeneTree" id="ENSGT00940000162597"/>
<dbReference type="HOGENOM" id="CLU_002753_3_7_1"/>
<dbReference type="InParanoid" id="Q9UHX3"/>
<dbReference type="OMA" id="RYICAYW"/>
<dbReference type="OrthoDB" id="1100386at2759"/>
<dbReference type="PAN-GO" id="Q9UHX3">
    <property type="GO annotations" value="3 GO annotations based on evolutionary models"/>
</dbReference>
<dbReference type="PhylomeDB" id="Q9UHX3"/>
<dbReference type="TreeFam" id="TF316380"/>
<dbReference type="PathwayCommons" id="Q9UHX3"/>
<dbReference type="Reactome" id="R-HSA-373080">
    <property type="pathway name" value="Class B/2 (Secretin family receptors)"/>
</dbReference>
<dbReference type="SignaLink" id="Q9UHX3"/>
<dbReference type="BioGRID-ORCS" id="30817">
    <property type="hits" value="9 hits in 1152 CRISPR screens"/>
</dbReference>
<dbReference type="ChiTaRS" id="ADGRE2">
    <property type="organism name" value="human"/>
</dbReference>
<dbReference type="EvolutionaryTrace" id="Q9UHX3"/>
<dbReference type="GeneWiki" id="EMR2"/>
<dbReference type="GenomeRNAi" id="30817"/>
<dbReference type="Pharos" id="Q9UHX3">
    <property type="development level" value="Tbio"/>
</dbReference>
<dbReference type="PRO" id="PR:Q9UHX3"/>
<dbReference type="Proteomes" id="UP000005640">
    <property type="component" value="Chromosome 19"/>
</dbReference>
<dbReference type="RNAct" id="Q9UHX3">
    <property type="molecule type" value="protein"/>
</dbReference>
<dbReference type="Bgee" id="ENSG00000127507">
    <property type="expression patterns" value="Expressed in monocyte and 113 other cell types or tissues"/>
</dbReference>
<dbReference type="ExpressionAtlas" id="Q9UHX3">
    <property type="expression patterns" value="baseline and differential"/>
</dbReference>
<dbReference type="GO" id="GO:0031256">
    <property type="term" value="C:leading edge membrane"/>
    <property type="evidence" value="ECO:0000314"/>
    <property type="project" value="UniProtKB"/>
</dbReference>
<dbReference type="GO" id="GO:0016020">
    <property type="term" value="C:membrane"/>
    <property type="evidence" value="ECO:0000304"/>
    <property type="project" value="GDB"/>
</dbReference>
<dbReference type="GO" id="GO:0005886">
    <property type="term" value="C:plasma membrane"/>
    <property type="evidence" value="ECO:0000318"/>
    <property type="project" value="GO_Central"/>
</dbReference>
<dbReference type="GO" id="GO:0032587">
    <property type="term" value="C:ruffle membrane"/>
    <property type="evidence" value="ECO:0007669"/>
    <property type="project" value="UniProtKB-SubCell"/>
</dbReference>
<dbReference type="GO" id="GO:0005509">
    <property type="term" value="F:calcium ion binding"/>
    <property type="evidence" value="ECO:0007669"/>
    <property type="project" value="InterPro"/>
</dbReference>
<dbReference type="GO" id="GO:0035374">
    <property type="term" value="F:chondroitin sulfate binding"/>
    <property type="evidence" value="ECO:0000315"/>
    <property type="project" value="UniProtKB"/>
</dbReference>
<dbReference type="GO" id="GO:0004930">
    <property type="term" value="F:G protein-coupled receptor activity"/>
    <property type="evidence" value="ECO:0000318"/>
    <property type="project" value="GO_Central"/>
</dbReference>
<dbReference type="GO" id="GO:0007189">
    <property type="term" value="P:adenylate cyclase-activating G protein-coupled receptor signaling pathway"/>
    <property type="evidence" value="ECO:0000318"/>
    <property type="project" value="GO_Central"/>
</dbReference>
<dbReference type="GO" id="GO:0007155">
    <property type="term" value="P:cell adhesion"/>
    <property type="evidence" value="ECO:0000315"/>
    <property type="project" value="UniProtKB"/>
</dbReference>
<dbReference type="GO" id="GO:0016477">
    <property type="term" value="P:cell migration"/>
    <property type="evidence" value="ECO:0000315"/>
    <property type="project" value="UniProtKB"/>
</dbReference>
<dbReference type="GO" id="GO:0007166">
    <property type="term" value="P:cell surface receptor signaling pathway"/>
    <property type="evidence" value="ECO:0007669"/>
    <property type="project" value="InterPro"/>
</dbReference>
<dbReference type="GO" id="GO:0007186">
    <property type="term" value="P:G protein-coupled receptor signaling pathway"/>
    <property type="evidence" value="ECO:0000304"/>
    <property type="project" value="GDB"/>
</dbReference>
<dbReference type="GO" id="GO:0071621">
    <property type="term" value="P:granulocyte chemotaxis"/>
    <property type="evidence" value="ECO:0000315"/>
    <property type="project" value="UniProtKB"/>
</dbReference>
<dbReference type="GO" id="GO:0006954">
    <property type="term" value="P:inflammatory response"/>
    <property type="evidence" value="ECO:0007669"/>
    <property type="project" value="UniProtKB-KW"/>
</dbReference>
<dbReference type="GO" id="GO:0043304">
    <property type="term" value="P:regulation of mast cell degranulation"/>
    <property type="evidence" value="ECO:0000315"/>
    <property type="project" value="UniProtKB"/>
</dbReference>
<dbReference type="CDD" id="cd15439">
    <property type="entry name" value="7tmB2_EMR"/>
    <property type="match status" value="1"/>
</dbReference>
<dbReference type="CDD" id="cd00054">
    <property type="entry name" value="EGF_CA"/>
    <property type="match status" value="4"/>
</dbReference>
<dbReference type="FunFam" id="2.10.25.10:FF:000177">
    <property type="entry name" value="Adhesion G protein-coupled receptor E2"/>
    <property type="match status" value="1"/>
</dbReference>
<dbReference type="FunFam" id="2.10.25.10:FF:000216">
    <property type="entry name" value="Adhesion G protein-coupled receptor E2"/>
    <property type="match status" value="1"/>
</dbReference>
<dbReference type="FunFam" id="2.10.25.10:FF:000269">
    <property type="entry name" value="Adhesion G protein-coupled receptor E2"/>
    <property type="match status" value="1"/>
</dbReference>
<dbReference type="FunFam" id="2.10.25.10:FF:000382">
    <property type="entry name" value="Adhesion G protein-coupled receptor E2"/>
    <property type="match status" value="1"/>
</dbReference>
<dbReference type="FunFam" id="2.10.25.10:FF:000422">
    <property type="entry name" value="Adhesion G protein-coupled receptor E2"/>
    <property type="match status" value="1"/>
</dbReference>
<dbReference type="FunFam" id="1.20.1070.10:FF:000054">
    <property type="entry name" value="Adhesion G protein-coupled receptor E3"/>
    <property type="match status" value="1"/>
</dbReference>
<dbReference type="FunFam" id="2.60.220.50:FF:000007">
    <property type="entry name" value="Adhesion G protein-coupled receptor E5"/>
    <property type="match status" value="1"/>
</dbReference>
<dbReference type="Gene3D" id="2.60.220.50">
    <property type="match status" value="1"/>
</dbReference>
<dbReference type="Gene3D" id="2.10.25.10">
    <property type="entry name" value="Laminin"/>
    <property type="match status" value="5"/>
</dbReference>
<dbReference type="Gene3D" id="1.20.1070.10">
    <property type="entry name" value="Rhodopsin 7-helix transmembrane proteins"/>
    <property type="match status" value="1"/>
</dbReference>
<dbReference type="InterPro" id="IPR001881">
    <property type="entry name" value="EGF-like_Ca-bd_dom"/>
</dbReference>
<dbReference type="InterPro" id="IPR000742">
    <property type="entry name" value="EGF-like_dom"/>
</dbReference>
<dbReference type="InterPro" id="IPR000152">
    <property type="entry name" value="EGF-type_Asp/Asn_hydroxyl_site"/>
</dbReference>
<dbReference type="InterPro" id="IPR018097">
    <property type="entry name" value="EGF_Ca-bd_CS"/>
</dbReference>
<dbReference type="InterPro" id="IPR057244">
    <property type="entry name" value="GAIN_B"/>
</dbReference>
<dbReference type="InterPro" id="IPR046338">
    <property type="entry name" value="GAIN_dom_sf"/>
</dbReference>
<dbReference type="InterPro" id="IPR017981">
    <property type="entry name" value="GPCR_2-like_7TM"/>
</dbReference>
<dbReference type="InterPro" id="IPR003056">
    <property type="entry name" value="GPCR_2_ADGRE2_ADGRE5"/>
</dbReference>
<dbReference type="InterPro" id="IPR000832">
    <property type="entry name" value="GPCR_2_secretin-like"/>
</dbReference>
<dbReference type="InterPro" id="IPR017983">
    <property type="entry name" value="GPCR_2_secretin-like_CS"/>
</dbReference>
<dbReference type="InterPro" id="IPR000203">
    <property type="entry name" value="GPS"/>
</dbReference>
<dbReference type="InterPro" id="IPR009030">
    <property type="entry name" value="Growth_fac_rcpt_cys_sf"/>
</dbReference>
<dbReference type="InterPro" id="IPR049883">
    <property type="entry name" value="NOTCH1_EGF-like"/>
</dbReference>
<dbReference type="PANTHER" id="PTHR12011:SF328">
    <property type="entry name" value="ADHESION G PROTEIN-COUPLED RECEPTOR E2"/>
    <property type="match status" value="1"/>
</dbReference>
<dbReference type="PANTHER" id="PTHR12011">
    <property type="entry name" value="ADHESION G-PROTEIN COUPLED RECEPTOR"/>
    <property type="match status" value="1"/>
</dbReference>
<dbReference type="Pfam" id="PF00002">
    <property type="entry name" value="7tm_2"/>
    <property type="match status" value="1"/>
</dbReference>
<dbReference type="Pfam" id="PF07645">
    <property type="entry name" value="EGF_CA"/>
    <property type="match status" value="4"/>
</dbReference>
<dbReference type="Pfam" id="PF01825">
    <property type="entry name" value="GPS"/>
    <property type="match status" value="1"/>
</dbReference>
<dbReference type="PRINTS" id="PR01278">
    <property type="entry name" value="CD97PROTEIN"/>
</dbReference>
<dbReference type="PRINTS" id="PR00249">
    <property type="entry name" value="GPCRSECRETIN"/>
</dbReference>
<dbReference type="SMART" id="SM00181">
    <property type="entry name" value="EGF"/>
    <property type="match status" value="5"/>
</dbReference>
<dbReference type="SMART" id="SM00179">
    <property type="entry name" value="EGF_CA"/>
    <property type="match status" value="4"/>
</dbReference>
<dbReference type="SMART" id="SM00303">
    <property type="entry name" value="GPS"/>
    <property type="match status" value="1"/>
</dbReference>
<dbReference type="SUPFAM" id="SSF57196">
    <property type="entry name" value="EGF/Laminin"/>
    <property type="match status" value="1"/>
</dbReference>
<dbReference type="SUPFAM" id="SSF57184">
    <property type="entry name" value="Growth factor receptor domain"/>
    <property type="match status" value="1"/>
</dbReference>
<dbReference type="PROSITE" id="PS00010">
    <property type="entry name" value="ASX_HYDROXYL"/>
    <property type="match status" value="4"/>
</dbReference>
<dbReference type="PROSITE" id="PS50026">
    <property type="entry name" value="EGF_3"/>
    <property type="match status" value="4"/>
</dbReference>
<dbReference type="PROSITE" id="PS01187">
    <property type="entry name" value="EGF_CA"/>
    <property type="match status" value="4"/>
</dbReference>
<dbReference type="PROSITE" id="PS00650">
    <property type="entry name" value="G_PROTEIN_RECEP_F2_2"/>
    <property type="match status" value="1"/>
</dbReference>
<dbReference type="PROSITE" id="PS50261">
    <property type="entry name" value="G_PROTEIN_RECEP_F2_4"/>
    <property type="match status" value="1"/>
</dbReference>
<dbReference type="PROSITE" id="PS50221">
    <property type="entry name" value="GAIN_B"/>
    <property type="match status" value="1"/>
</dbReference>
<protein>
    <recommendedName>
        <fullName evidence="17">Adhesion G protein-coupled receptor E2</fullName>
    </recommendedName>
    <alternativeName>
        <fullName>EGF-like module receptor 2</fullName>
    </alternativeName>
    <alternativeName>
        <fullName>EGF-like module-containing mucin-like hormone receptor-like 2</fullName>
    </alternativeName>
    <cdAntigenName>CD312</cdAntigenName>
</protein>